<proteinExistence type="inferred from homology"/>
<keyword id="KW-0067">ATP-binding</keyword>
<keyword id="KW-0143">Chaperone</keyword>
<keyword id="KW-0963">Cytoplasm</keyword>
<keyword id="KW-0547">Nucleotide-binding</keyword>
<keyword id="KW-1185">Reference proteome</keyword>
<keyword id="KW-0346">Stress response</keyword>
<evidence type="ECO:0000255" key="1">
    <source>
        <dbReference type="HAMAP-Rule" id="MF_00249"/>
    </source>
</evidence>
<sequence length="444" mass="49906">MSNMTPKEIKHELDRHIIGQDNAKRAVAIALRNRWRRMQLDKEMRQEVTPKNILMIGPTGVGKTEIARRLAKLANAPFIKVEATKFTEVGYVGKEVESIVRDLVDVAIKLTREEEMAKVAHKAEDLAEDRILDILIPPAKTGNDWETVKTEDSATRQSFRKKLREGKLDDKEVEIDLPAPQIGVEIMAPPGMEEMTNQLQGMFQSMSGKDKTKKRKMKIKEALKVLIESEAAKLVNEEDIKEKALFSAENNGIIFIDEIDKICKRGDSAGPDVSREGVQRDLLPLIEGSTVSTKHGMVKTDHMLFIASGAFQVAKPSDLIPELQGRLPIRVELEALTEEDLAKILTEPKASLSEQYKALLATEGITLQFSKDGIDKIAKSAWHVNETTENIGARRLHTLMERILDELSYEASERKGESITIDENYVANTLDDLLENEDLSRYIL</sequence>
<dbReference type="EMBL" id="CP000510">
    <property type="protein sequence ID" value="ABM01878.1"/>
    <property type="molecule type" value="Genomic_DNA"/>
</dbReference>
<dbReference type="RefSeq" id="WP_011768437.1">
    <property type="nucleotide sequence ID" value="NC_008709.1"/>
</dbReference>
<dbReference type="SMR" id="A1SQW3"/>
<dbReference type="STRING" id="357804.Ping_0003"/>
<dbReference type="KEGG" id="pin:Ping_0003"/>
<dbReference type="eggNOG" id="COG1220">
    <property type="taxonomic scope" value="Bacteria"/>
</dbReference>
<dbReference type="HOGENOM" id="CLU_033123_0_0_6"/>
<dbReference type="OrthoDB" id="9804062at2"/>
<dbReference type="Proteomes" id="UP000000639">
    <property type="component" value="Chromosome"/>
</dbReference>
<dbReference type="GO" id="GO:0009376">
    <property type="term" value="C:HslUV protease complex"/>
    <property type="evidence" value="ECO:0007669"/>
    <property type="project" value="UniProtKB-UniRule"/>
</dbReference>
<dbReference type="GO" id="GO:0005524">
    <property type="term" value="F:ATP binding"/>
    <property type="evidence" value="ECO:0007669"/>
    <property type="project" value="UniProtKB-UniRule"/>
</dbReference>
<dbReference type="GO" id="GO:0016887">
    <property type="term" value="F:ATP hydrolysis activity"/>
    <property type="evidence" value="ECO:0007669"/>
    <property type="project" value="InterPro"/>
</dbReference>
<dbReference type="GO" id="GO:0008233">
    <property type="term" value="F:peptidase activity"/>
    <property type="evidence" value="ECO:0007669"/>
    <property type="project" value="InterPro"/>
</dbReference>
<dbReference type="GO" id="GO:0036402">
    <property type="term" value="F:proteasome-activating activity"/>
    <property type="evidence" value="ECO:0007669"/>
    <property type="project" value="UniProtKB-UniRule"/>
</dbReference>
<dbReference type="GO" id="GO:0043335">
    <property type="term" value="P:protein unfolding"/>
    <property type="evidence" value="ECO:0007669"/>
    <property type="project" value="UniProtKB-UniRule"/>
</dbReference>
<dbReference type="GO" id="GO:0051603">
    <property type="term" value="P:proteolysis involved in protein catabolic process"/>
    <property type="evidence" value="ECO:0007669"/>
    <property type="project" value="TreeGrafter"/>
</dbReference>
<dbReference type="CDD" id="cd19498">
    <property type="entry name" value="RecA-like_HslU"/>
    <property type="match status" value="1"/>
</dbReference>
<dbReference type="FunFam" id="1.10.8.10:FF:000028">
    <property type="entry name" value="ATP-dependent protease ATPase subunit HslU"/>
    <property type="match status" value="1"/>
</dbReference>
<dbReference type="FunFam" id="3.40.50.300:FF:000213">
    <property type="entry name" value="ATP-dependent protease ATPase subunit HslU"/>
    <property type="match status" value="1"/>
</dbReference>
<dbReference type="FunFam" id="3.40.50.300:FF:000220">
    <property type="entry name" value="ATP-dependent protease ATPase subunit HslU"/>
    <property type="match status" value="1"/>
</dbReference>
<dbReference type="Gene3D" id="1.10.8.60">
    <property type="match status" value="1"/>
</dbReference>
<dbReference type="Gene3D" id="1.10.8.10">
    <property type="entry name" value="DNA helicase RuvA subunit, C-terminal domain"/>
    <property type="match status" value="1"/>
</dbReference>
<dbReference type="Gene3D" id="3.40.50.300">
    <property type="entry name" value="P-loop containing nucleotide triphosphate hydrolases"/>
    <property type="match status" value="2"/>
</dbReference>
<dbReference type="HAMAP" id="MF_00249">
    <property type="entry name" value="HslU"/>
    <property type="match status" value="1"/>
</dbReference>
<dbReference type="InterPro" id="IPR003593">
    <property type="entry name" value="AAA+_ATPase"/>
</dbReference>
<dbReference type="InterPro" id="IPR050052">
    <property type="entry name" value="ATP-dep_Clp_protease_ClpX"/>
</dbReference>
<dbReference type="InterPro" id="IPR003959">
    <property type="entry name" value="ATPase_AAA_core"/>
</dbReference>
<dbReference type="InterPro" id="IPR019489">
    <property type="entry name" value="Clp_ATPase_C"/>
</dbReference>
<dbReference type="InterPro" id="IPR004491">
    <property type="entry name" value="HslU"/>
</dbReference>
<dbReference type="InterPro" id="IPR027417">
    <property type="entry name" value="P-loop_NTPase"/>
</dbReference>
<dbReference type="NCBIfam" id="TIGR00390">
    <property type="entry name" value="hslU"/>
    <property type="match status" value="1"/>
</dbReference>
<dbReference type="NCBIfam" id="NF003544">
    <property type="entry name" value="PRK05201.1"/>
    <property type="match status" value="1"/>
</dbReference>
<dbReference type="PANTHER" id="PTHR48102">
    <property type="entry name" value="ATP-DEPENDENT CLP PROTEASE ATP-BINDING SUBUNIT CLPX-LIKE, MITOCHONDRIAL-RELATED"/>
    <property type="match status" value="1"/>
</dbReference>
<dbReference type="PANTHER" id="PTHR48102:SF3">
    <property type="entry name" value="ATP-DEPENDENT PROTEASE ATPASE SUBUNIT HSLU"/>
    <property type="match status" value="1"/>
</dbReference>
<dbReference type="Pfam" id="PF00004">
    <property type="entry name" value="AAA"/>
    <property type="match status" value="1"/>
</dbReference>
<dbReference type="Pfam" id="PF07724">
    <property type="entry name" value="AAA_2"/>
    <property type="match status" value="1"/>
</dbReference>
<dbReference type="Pfam" id="PF10431">
    <property type="entry name" value="ClpB_D2-small"/>
    <property type="match status" value="1"/>
</dbReference>
<dbReference type="SMART" id="SM00382">
    <property type="entry name" value="AAA"/>
    <property type="match status" value="1"/>
</dbReference>
<dbReference type="SMART" id="SM01086">
    <property type="entry name" value="ClpB_D2-small"/>
    <property type="match status" value="1"/>
</dbReference>
<dbReference type="SUPFAM" id="SSF52540">
    <property type="entry name" value="P-loop containing nucleoside triphosphate hydrolases"/>
    <property type="match status" value="1"/>
</dbReference>
<accession>A1SQW3</accession>
<name>HSLU_PSYIN</name>
<feature type="chain" id="PRO_1000012781" description="ATP-dependent protease ATPase subunit HslU">
    <location>
        <begin position="1"/>
        <end position="444"/>
    </location>
</feature>
<feature type="binding site" evidence="1">
    <location>
        <position position="18"/>
    </location>
    <ligand>
        <name>ATP</name>
        <dbReference type="ChEBI" id="CHEBI:30616"/>
    </ligand>
</feature>
<feature type="binding site" evidence="1">
    <location>
        <begin position="60"/>
        <end position="65"/>
    </location>
    <ligand>
        <name>ATP</name>
        <dbReference type="ChEBI" id="CHEBI:30616"/>
    </ligand>
</feature>
<feature type="binding site" evidence="1">
    <location>
        <position position="257"/>
    </location>
    <ligand>
        <name>ATP</name>
        <dbReference type="ChEBI" id="CHEBI:30616"/>
    </ligand>
</feature>
<feature type="binding site" evidence="1">
    <location>
        <position position="322"/>
    </location>
    <ligand>
        <name>ATP</name>
        <dbReference type="ChEBI" id="CHEBI:30616"/>
    </ligand>
</feature>
<feature type="binding site" evidence="1">
    <location>
        <position position="394"/>
    </location>
    <ligand>
        <name>ATP</name>
        <dbReference type="ChEBI" id="CHEBI:30616"/>
    </ligand>
</feature>
<gene>
    <name evidence="1" type="primary">hslU</name>
    <name type="ordered locus">Ping_0003</name>
</gene>
<protein>
    <recommendedName>
        <fullName evidence="1">ATP-dependent protease ATPase subunit HslU</fullName>
    </recommendedName>
    <alternativeName>
        <fullName evidence="1">Unfoldase HslU</fullName>
    </alternativeName>
</protein>
<organism>
    <name type="scientific">Psychromonas ingrahamii (strain DSM 17664 / CCUG 51855 / 37)</name>
    <dbReference type="NCBI Taxonomy" id="357804"/>
    <lineage>
        <taxon>Bacteria</taxon>
        <taxon>Pseudomonadati</taxon>
        <taxon>Pseudomonadota</taxon>
        <taxon>Gammaproteobacteria</taxon>
        <taxon>Alteromonadales</taxon>
        <taxon>Psychromonadaceae</taxon>
        <taxon>Psychromonas</taxon>
    </lineage>
</organism>
<reference key="1">
    <citation type="journal article" date="2008" name="BMC Genomics">
        <title>Genomics of an extreme psychrophile, Psychromonas ingrahamii.</title>
        <authorList>
            <person name="Riley M."/>
            <person name="Staley J.T."/>
            <person name="Danchin A."/>
            <person name="Wang T.Z."/>
            <person name="Brettin T.S."/>
            <person name="Hauser L.J."/>
            <person name="Land M.L."/>
            <person name="Thompson L.S."/>
        </authorList>
    </citation>
    <scope>NUCLEOTIDE SEQUENCE [LARGE SCALE GENOMIC DNA]</scope>
    <source>
        <strain>DSM 17664 / CCUG 51855 / 37</strain>
    </source>
</reference>
<comment type="function">
    <text evidence="1">ATPase subunit of a proteasome-like degradation complex; this subunit has chaperone activity. The binding of ATP and its subsequent hydrolysis by HslU are essential for unfolding of protein substrates subsequently hydrolyzed by HslV. HslU recognizes the N-terminal part of its protein substrates and unfolds these before they are guided to HslV for hydrolysis.</text>
</comment>
<comment type="subunit">
    <text evidence="1">A double ring-shaped homohexamer of HslV is capped on each side by a ring-shaped HslU homohexamer. The assembly of the HslU/HslV complex is dependent on binding of ATP.</text>
</comment>
<comment type="subcellular location">
    <subcellularLocation>
        <location evidence="1">Cytoplasm</location>
    </subcellularLocation>
</comment>
<comment type="similarity">
    <text evidence="1">Belongs to the ClpX chaperone family. HslU subfamily.</text>
</comment>